<accession>Q16DW6</accession>
<proteinExistence type="inferred from homology"/>
<dbReference type="EC" id="6.3.2.1" evidence="1"/>
<dbReference type="EMBL" id="CP000362">
    <property type="protein sequence ID" value="ABG29827.1"/>
    <property type="molecule type" value="Genomic_DNA"/>
</dbReference>
<dbReference type="RefSeq" id="WP_011566449.1">
    <property type="nucleotide sequence ID" value="NC_008209.1"/>
</dbReference>
<dbReference type="SMR" id="Q16DW6"/>
<dbReference type="STRING" id="375451.RD1_0091"/>
<dbReference type="KEGG" id="rde:RD1_0091"/>
<dbReference type="eggNOG" id="COG0414">
    <property type="taxonomic scope" value="Bacteria"/>
</dbReference>
<dbReference type="HOGENOM" id="CLU_047148_0_0_5"/>
<dbReference type="OrthoDB" id="9773087at2"/>
<dbReference type="UniPathway" id="UPA00028">
    <property type="reaction ID" value="UER00005"/>
</dbReference>
<dbReference type="Proteomes" id="UP000007029">
    <property type="component" value="Chromosome"/>
</dbReference>
<dbReference type="GO" id="GO:0005829">
    <property type="term" value="C:cytosol"/>
    <property type="evidence" value="ECO:0007669"/>
    <property type="project" value="TreeGrafter"/>
</dbReference>
<dbReference type="GO" id="GO:0005524">
    <property type="term" value="F:ATP binding"/>
    <property type="evidence" value="ECO:0007669"/>
    <property type="project" value="UniProtKB-KW"/>
</dbReference>
<dbReference type="GO" id="GO:0004592">
    <property type="term" value="F:pantoate-beta-alanine ligase activity"/>
    <property type="evidence" value="ECO:0007669"/>
    <property type="project" value="UniProtKB-UniRule"/>
</dbReference>
<dbReference type="GO" id="GO:0015940">
    <property type="term" value="P:pantothenate biosynthetic process"/>
    <property type="evidence" value="ECO:0007669"/>
    <property type="project" value="UniProtKB-UniRule"/>
</dbReference>
<dbReference type="CDD" id="cd00560">
    <property type="entry name" value="PanC"/>
    <property type="match status" value="1"/>
</dbReference>
<dbReference type="FunFam" id="3.40.50.620:FF:000114">
    <property type="entry name" value="Pantothenate synthetase"/>
    <property type="match status" value="1"/>
</dbReference>
<dbReference type="Gene3D" id="3.40.50.620">
    <property type="entry name" value="HUPs"/>
    <property type="match status" value="1"/>
</dbReference>
<dbReference type="Gene3D" id="3.30.1300.10">
    <property type="entry name" value="Pantoate-beta-alanine ligase, C-terminal domain"/>
    <property type="match status" value="1"/>
</dbReference>
<dbReference type="HAMAP" id="MF_00158">
    <property type="entry name" value="PanC"/>
    <property type="match status" value="1"/>
</dbReference>
<dbReference type="InterPro" id="IPR004821">
    <property type="entry name" value="Cyt_trans-like"/>
</dbReference>
<dbReference type="InterPro" id="IPR003721">
    <property type="entry name" value="Pantoate_ligase"/>
</dbReference>
<dbReference type="InterPro" id="IPR042176">
    <property type="entry name" value="Pantoate_ligase_C"/>
</dbReference>
<dbReference type="InterPro" id="IPR014729">
    <property type="entry name" value="Rossmann-like_a/b/a_fold"/>
</dbReference>
<dbReference type="NCBIfam" id="TIGR00125">
    <property type="entry name" value="cyt_tran_rel"/>
    <property type="match status" value="1"/>
</dbReference>
<dbReference type="NCBIfam" id="TIGR00018">
    <property type="entry name" value="panC"/>
    <property type="match status" value="1"/>
</dbReference>
<dbReference type="PANTHER" id="PTHR21299">
    <property type="entry name" value="CYTIDYLATE KINASE/PANTOATE-BETA-ALANINE LIGASE"/>
    <property type="match status" value="1"/>
</dbReference>
<dbReference type="PANTHER" id="PTHR21299:SF1">
    <property type="entry name" value="PANTOATE--BETA-ALANINE LIGASE"/>
    <property type="match status" value="1"/>
</dbReference>
<dbReference type="Pfam" id="PF02569">
    <property type="entry name" value="Pantoate_ligase"/>
    <property type="match status" value="1"/>
</dbReference>
<dbReference type="SUPFAM" id="SSF52374">
    <property type="entry name" value="Nucleotidylyl transferase"/>
    <property type="match status" value="1"/>
</dbReference>
<feature type="chain" id="PRO_0000305538" description="Pantothenate synthetase">
    <location>
        <begin position="1"/>
        <end position="284"/>
    </location>
</feature>
<feature type="active site" description="Proton donor" evidence="1">
    <location>
        <position position="39"/>
    </location>
</feature>
<feature type="binding site" evidence="1">
    <location>
        <begin position="32"/>
        <end position="39"/>
    </location>
    <ligand>
        <name>ATP</name>
        <dbReference type="ChEBI" id="CHEBI:30616"/>
    </ligand>
</feature>
<feature type="binding site" evidence="1">
    <location>
        <position position="63"/>
    </location>
    <ligand>
        <name>(R)-pantoate</name>
        <dbReference type="ChEBI" id="CHEBI:15980"/>
    </ligand>
</feature>
<feature type="binding site" evidence="1">
    <location>
        <position position="63"/>
    </location>
    <ligand>
        <name>beta-alanine</name>
        <dbReference type="ChEBI" id="CHEBI:57966"/>
    </ligand>
</feature>
<feature type="binding site" evidence="1">
    <location>
        <begin position="149"/>
        <end position="152"/>
    </location>
    <ligand>
        <name>ATP</name>
        <dbReference type="ChEBI" id="CHEBI:30616"/>
    </ligand>
</feature>
<feature type="binding site" evidence="1">
    <location>
        <position position="155"/>
    </location>
    <ligand>
        <name>(R)-pantoate</name>
        <dbReference type="ChEBI" id="CHEBI:15980"/>
    </ligand>
</feature>
<feature type="binding site" evidence="1">
    <location>
        <position position="178"/>
    </location>
    <ligand>
        <name>ATP</name>
        <dbReference type="ChEBI" id="CHEBI:30616"/>
    </ligand>
</feature>
<feature type="binding site" evidence="1">
    <location>
        <begin position="186"/>
        <end position="189"/>
    </location>
    <ligand>
        <name>ATP</name>
        <dbReference type="ChEBI" id="CHEBI:30616"/>
    </ligand>
</feature>
<gene>
    <name evidence="1" type="primary">panC</name>
    <name type="ordered locus">RD1_0091</name>
</gene>
<keyword id="KW-0067">ATP-binding</keyword>
<keyword id="KW-0963">Cytoplasm</keyword>
<keyword id="KW-0436">Ligase</keyword>
<keyword id="KW-0547">Nucleotide-binding</keyword>
<keyword id="KW-0566">Pantothenate biosynthesis</keyword>
<keyword id="KW-1185">Reference proteome</keyword>
<evidence type="ECO:0000255" key="1">
    <source>
        <dbReference type="HAMAP-Rule" id="MF_00158"/>
    </source>
</evidence>
<organism>
    <name type="scientific">Roseobacter denitrificans (strain ATCC 33942 / OCh 114)</name>
    <name type="common">Erythrobacter sp. (strain OCh 114)</name>
    <name type="synonym">Roseobacter denitrificans</name>
    <dbReference type="NCBI Taxonomy" id="375451"/>
    <lineage>
        <taxon>Bacteria</taxon>
        <taxon>Pseudomonadati</taxon>
        <taxon>Pseudomonadota</taxon>
        <taxon>Alphaproteobacteria</taxon>
        <taxon>Rhodobacterales</taxon>
        <taxon>Roseobacteraceae</taxon>
        <taxon>Roseobacter</taxon>
    </lineage>
</organism>
<sequence>MTVPVLRTLSALRSATREWHLAGETIGVVPTMGALHDGHLSLVAAAKSACDRVIVTIFVNPKQFNKASDLASYPRTEEDDARKLARFDVDAVYAPDVSQIYPEGFCTNVSVAGMTDVLCGAHRPGHFDGVATVVTKLFTQTSADKAFFGEKDFQQLMVVQRMARDLDIPIEVVGCPTIREEDGLAMSSRNLLLSDRARTMAPRMHEIMQEAATALGQGAPFDALQATALRQLTAAGFTDVDYFELRSCASLSLLDHASVPARLFAAAWLAGVRLIDNIDVPVAR</sequence>
<protein>
    <recommendedName>
        <fullName evidence="1">Pantothenate synthetase</fullName>
        <shortName evidence="1">PS</shortName>
        <ecNumber evidence="1">6.3.2.1</ecNumber>
    </recommendedName>
    <alternativeName>
        <fullName evidence="1">Pantoate--beta-alanine ligase</fullName>
    </alternativeName>
    <alternativeName>
        <fullName evidence="1">Pantoate-activating enzyme</fullName>
    </alternativeName>
</protein>
<comment type="function">
    <text evidence="1">Catalyzes the condensation of pantoate with beta-alanine in an ATP-dependent reaction via a pantoyl-adenylate intermediate.</text>
</comment>
<comment type="catalytic activity">
    <reaction evidence="1">
        <text>(R)-pantoate + beta-alanine + ATP = (R)-pantothenate + AMP + diphosphate + H(+)</text>
        <dbReference type="Rhea" id="RHEA:10912"/>
        <dbReference type="ChEBI" id="CHEBI:15378"/>
        <dbReference type="ChEBI" id="CHEBI:15980"/>
        <dbReference type="ChEBI" id="CHEBI:29032"/>
        <dbReference type="ChEBI" id="CHEBI:30616"/>
        <dbReference type="ChEBI" id="CHEBI:33019"/>
        <dbReference type="ChEBI" id="CHEBI:57966"/>
        <dbReference type="ChEBI" id="CHEBI:456215"/>
        <dbReference type="EC" id="6.3.2.1"/>
    </reaction>
</comment>
<comment type="pathway">
    <text evidence="1">Cofactor biosynthesis; (R)-pantothenate biosynthesis; (R)-pantothenate from (R)-pantoate and beta-alanine: step 1/1.</text>
</comment>
<comment type="subunit">
    <text evidence="1">Homodimer.</text>
</comment>
<comment type="subcellular location">
    <subcellularLocation>
        <location evidence="1">Cytoplasm</location>
    </subcellularLocation>
</comment>
<comment type="miscellaneous">
    <text evidence="1">The reaction proceeds by a bi uni uni bi ping pong mechanism.</text>
</comment>
<comment type="similarity">
    <text evidence="1">Belongs to the pantothenate synthetase family.</text>
</comment>
<name>PANC_ROSDO</name>
<reference key="1">
    <citation type="journal article" date="2007" name="J. Bacteriol.">
        <title>The complete genome sequence of Roseobacter denitrificans reveals a mixotrophic rather than photosynthetic metabolism.</title>
        <authorList>
            <person name="Swingley W.D."/>
            <person name="Sadekar S."/>
            <person name="Mastrian S.D."/>
            <person name="Matthies H.J."/>
            <person name="Hao J."/>
            <person name="Ramos H."/>
            <person name="Acharya C.R."/>
            <person name="Conrad A.L."/>
            <person name="Taylor H.L."/>
            <person name="Dejesa L.C."/>
            <person name="Shah M.K."/>
            <person name="O'Huallachain M.E."/>
            <person name="Lince M.T."/>
            <person name="Blankenship R.E."/>
            <person name="Beatty J.T."/>
            <person name="Touchman J.W."/>
        </authorList>
    </citation>
    <scope>NUCLEOTIDE SEQUENCE [LARGE SCALE GENOMIC DNA]</scope>
    <source>
        <strain>ATCC 33942 / OCh 114</strain>
    </source>
</reference>